<protein>
    <recommendedName>
        <fullName>N-alpha-acetyltransferase 38, NatC auxiliary subunit</fullName>
    </recommendedName>
    <alternativeName>
        <fullName>LSM domain-containing protein 1</fullName>
    </alternativeName>
</protein>
<sequence>MAGAGPTMLLREENGCCSRRQSSSSAGDSDGEQEDSPATRARQQLEALLNKTMRIRMTDGRTLVGCFLCTDRDCNVILGSAQEFLKPSDSFSAGEPRVLGLAMVPGHHIVSIEVQRESLSGGPYL</sequence>
<proteinExistence type="evidence at protein level"/>
<gene>
    <name type="primary">Naa38</name>
    <name type="synonym">Lsmd1</name>
</gene>
<keyword id="KW-0007">Acetylation</keyword>
<keyword id="KW-0025">Alternative splicing</keyword>
<keyword id="KW-0963">Cytoplasm</keyword>
<keyword id="KW-0539">Nucleus</keyword>
<keyword id="KW-0597">Phosphoprotein</keyword>
<keyword id="KW-1185">Reference proteome</keyword>
<dbReference type="EMBL" id="AK018782">
    <property type="protein sequence ID" value="BAB31406.1"/>
    <property type="molecule type" value="mRNA"/>
</dbReference>
<dbReference type="EMBL" id="AL596125">
    <property type="status" value="NOT_ANNOTATED_CDS"/>
    <property type="molecule type" value="Genomic_DNA"/>
</dbReference>
<dbReference type="EMBL" id="BC048499">
    <property type="protein sequence ID" value="AAH48499.1"/>
    <property type="molecule type" value="mRNA"/>
</dbReference>
<dbReference type="EMBL" id="BC062267">
    <property type="protein sequence ID" value="AAH62267.1"/>
    <property type="molecule type" value="mRNA"/>
</dbReference>
<dbReference type="CCDS" id="CCDS24893.1">
    <molecule id="Q9D2U5-1"/>
</dbReference>
<dbReference type="RefSeq" id="NP_084359.1">
    <molecule id="Q9D2U5-1"/>
    <property type="nucleotide sequence ID" value="NM_030083.2"/>
</dbReference>
<dbReference type="SMR" id="Q9D2U5"/>
<dbReference type="FunCoup" id="Q9D2U5">
    <property type="interactions" value="1379"/>
</dbReference>
<dbReference type="STRING" id="10090.ENSMUSP00000123155"/>
<dbReference type="iPTMnet" id="Q9D2U5"/>
<dbReference type="PhosphoSitePlus" id="Q9D2U5"/>
<dbReference type="SwissPalm" id="Q9D2U5"/>
<dbReference type="PaxDb" id="10090-ENSMUSP00000123155"/>
<dbReference type="PeptideAtlas" id="Q9D2U5"/>
<dbReference type="ProteomicsDB" id="292119">
    <molecule id="Q9D2U5-1"/>
</dbReference>
<dbReference type="ProteomicsDB" id="292120">
    <molecule id="Q9D2U5-2"/>
</dbReference>
<dbReference type="Pumba" id="Q9D2U5"/>
<dbReference type="Antibodypedia" id="58902">
    <property type="antibodies" value="52 antibodies from 13 providers"/>
</dbReference>
<dbReference type="DNASU" id="78304"/>
<dbReference type="Ensembl" id="ENSMUST00000144531.2">
    <molecule id="Q9D2U5-1"/>
    <property type="protein sequence ID" value="ENSMUSP00000123155.2"/>
    <property type="gene ID" value="ENSMUSG00000059278.10"/>
</dbReference>
<dbReference type="GeneID" id="78304"/>
<dbReference type="KEGG" id="mmu:78304"/>
<dbReference type="UCSC" id="uc007jqa.1">
    <molecule id="Q9D2U5-1"/>
    <property type="organism name" value="mouse"/>
</dbReference>
<dbReference type="AGR" id="MGI:1925554"/>
<dbReference type="CTD" id="84316"/>
<dbReference type="MGI" id="MGI:1925554">
    <property type="gene designation" value="Naa38"/>
</dbReference>
<dbReference type="VEuPathDB" id="HostDB:ENSMUSG00000059278"/>
<dbReference type="eggNOG" id="KOG3168">
    <property type="taxonomic scope" value="Eukaryota"/>
</dbReference>
<dbReference type="GeneTree" id="ENSGT00390000018418"/>
<dbReference type="HOGENOM" id="CLU_076902_4_3_1"/>
<dbReference type="InParanoid" id="Q9D2U5"/>
<dbReference type="OMA" id="THEYRCP"/>
<dbReference type="OrthoDB" id="368909at2759"/>
<dbReference type="PhylomeDB" id="Q9D2U5"/>
<dbReference type="TreeFam" id="TF323867"/>
<dbReference type="BioGRID-ORCS" id="78304">
    <property type="hits" value="17 hits in 78 CRISPR screens"/>
</dbReference>
<dbReference type="ChiTaRS" id="Naa38">
    <property type="organism name" value="mouse"/>
</dbReference>
<dbReference type="PRO" id="PR:Q9D2U5"/>
<dbReference type="Proteomes" id="UP000000589">
    <property type="component" value="Chromosome 11"/>
</dbReference>
<dbReference type="RNAct" id="Q9D2U5">
    <property type="molecule type" value="protein"/>
</dbReference>
<dbReference type="Bgee" id="ENSMUSG00000059278">
    <property type="expression patterns" value="Expressed in spermatid and 262 other cell types or tissues"/>
</dbReference>
<dbReference type="GO" id="GO:0005737">
    <property type="term" value="C:cytoplasm"/>
    <property type="evidence" value="ECO:0000250"/>
    <property type="project" value="UniProtKB"/>
</dbReference>
<dbReference type="GO" id="GO:0031417">
    <property type="term" value="C:NatC complex"/>
    <property type="evidence" value="ECO:0000250"/>
    <property type="project" value="UniProtKB"/>
</dbReference>
<dbReference type="GO" id="GO:0005654">
    <property type="term" value="C:nucleoplasm"/>
    <property type="evidence" value="ECO:0007669"/>
    <property type="project" value="Ensembl"/>
</dbReference>
<dbReference type="GO" id="GO:0005634">
    <property type="term" value="C:nucleus"/>
    <property type="evidence" value="ECO:0000250"/>
    <property type="project" value="UniProtKB"/>
</dbReference>
<dbReference type="GO" id="GO:0003723">
    <property type="term" value="F:RNA binding"/>
    <property type="evidence" value="ECO:0007669"/>
    <property type="project" value="InterPro"/>
</dbReference>
<dbReference type="GO" id="GO:0043066">
    <property type="term" value="P:negative regulation of apoptotic process"/>
    <property type="evidence" value="ECO:0000250"/>
    <property type="project" value="UniProtKB"/>
</dbReference>
<dbReference type="CDD" id="cd06168">
    <property type="entry name" value="LSMD1"/>
    <property type="match status" value="1"/>
</dbReference>
<dbReference type="FunFam" id="2.30.30.100:FF:000028">
    <property type="entry name" value="N-alpha-acetyltransferase 38, NatC auxiliary subunit"/>
    <property type="match status" value="1"/>
</dbReference>
<dbReference type="Gene3D" id="2.30.30.100">
    <property type="match status" value="1"/>
</dbReference>
<dbReference type="InterPro" id="IPR010920">
    <property type="entry name" value="LSM_dom_sf"/>
</dbReference>
<dbReference type="InterPro" id="IPR034110">
    <property type="entry name" value="LSMD1_Sm"/>
</dbReference>
<dbReference type="InterPro" id="IPR047575">
    <property type="entry name" value="Sm"/>
</dbReference>
<dbReference type="InterPro" id="IPR001163">
    <property type="entry name" value="Sm_dom_euk/arc"/>
</dbReference>
<dbReference type="InterPro" id="IPR050914">
    <property type="entry name" value="snRNP_SmB/NAA38-like"/>
</dbReference>
<dbReference type="PANTHER" id="PTHR10701:SF5">
    <property type="entry name" value="N-ALPHA-ACETYLTRANSFERASE 38, NATC AUXILIARY SUBUNIT"/>
    <property type="match status" value="1"/>
</dbReference>
<dbReference type="PANTHER" id="PTHR10701">
    <property type="entry name" value="SMALL NUCLEAR RIBONUCLEOPROTEIN-ASSOCIATED PROTEIN B AND N"/>
    <property type="match status" value="1"/>
</dbReference>
<dbReference type="Pfam" id="PF01423">
    <property type="entry name" value="LSM"/>
    <property type="match status" value="1"/>
</dbReference>
<dbReference type="SMART" id="SM00651">
    <property type="entry name" value="Sm"/>
    <property type="match status" value="1"/>
</dbReference>
<dbReference type="SUPFAM" id="SSF50182">
    <property type="entry name" value="Sm-like ribonucleoproteins"/>
    <property type="match status" value="1"/>
</dbReference>
<dbReference type="PROSITE" id="PS52002">
    <property type="entry name" value="SM"/>
    <property type="match status" value="1"/>
</dbReference>
<name>NAA38_MOUSE</name>
<organism>
    <name type="scientific">Mus musculus</name>
    <name type="common">Mouse</name>
    <dbReference type="NCBI Taxonomy" id="10090"/>
    <lineage>
        <taxon>Eukaryota</taxon>
        <taxon>Metazoa</taxon>
        <taxon>Chordata</taxon>
        <taxon>Craniata</taxon>
        <taxon>Vertebrata</taxon>
        <taxon>Euteleostomi</taxon>
        <taxon>Mammalia</taxon>
        <taxon>Eutheria</taxon>
        <taxon>Euarchontoglires</taxon>
        <taxon>Glires</taxon>
        <taxon>Rodentia</taxon>
        <taxon>Myomorpha</taxon>
        <taxon>Muroidea</taxon>
        <taxon>Muridae</taxon>
        <taxon>Murinae</taxon>
        <taxon>Mus</taxon>
        <taxon>Mus</taxon>
    </lineage>
</organism>
<reference key="1">
    <citation type="journal article" date="2005" name="Science">
        <title>The transcriptional landscape of the mammalian genome.</title>
        <authorList>
            <person name="Carninci P."/>
            <person name="Kasukawa T."/>
            <person name="Katayama S."/>
            <person name="Gough J."/>
            <person name="Frith M.C."/>
            <person name="Maeda N."/>
            <person name="Oyama R."/>
            <person name="Ravasi T."/>
            <person name="Lenhard B."/>
            <person name="Wells C."/>
            <person name="Kodzius R."/>
            <person name="Shimokawa K."/>
            <person name="Bajic V.B."/>
            <person name="Brenner S.E."/>
            <person name="Batalov S."/>
            <person name="Forrest A.R."/>
            <person name="Zavolan M."/>
            <person name="Davis M.J."/>
            <person name="Wilming L.G."/>
            <person name="Aidinis V."/>
            <person name="Allen J.E."/>
            <person name="Ambesi-Impiombato A."/>
            <person name="Apweiler R."/>
            <person name="Aturaliya R.N."/>
            <person name="Bailey T.L."/>
            <person name="Bansal M."/>
            <person name="Baxter L."/>
            <person name="Beisel K.W."/>
            <person name="Bersano T."/>
            <person name="Bono H."/>
            <person name="Chalk A.M."/>
            <person name="Chiu K.P."/>
            <person name="Choudhary V."/>
            <person name="Christoffels A."/>
            <person name="Clutterbuck D.R."/>
            <person name="Crowe M.L."/>
            <person name="Dalla E."/>
            <person name="Dalrymple B.P."/>
            <person name="de Bono B."/>
            <person name="Della Gatta G."/>
            <person name="di Bernardo D."/>
            <person name="Down T."/>
            <person name="Engstrom P."/>
            <person name="Fagiolini M."/>
            <person name="Faulkner G."/>
            <person name="Fletcher C.F."/>
            <person name="Fukushima T."/>
            <person name="Furuno M."/>
            <person name="Futaki S."/>
            <person name="Gariboldi M."/>
            <person name="Georgii-Hemming P."/>
            <person name="Gingeras T.R."/>
            <person name="Gojobori T."/>
            <person name="Green R.E."/>
            <person name="Gustincich S."/>
            <person name="Harbers M."/>
            <person name="Hayashi Y."/>
            <person name="Hensch T.K."/>
            <person name="Hirokawa N."/>
            <person name="Hill D."/>
            <person name="Huminiecki L."/>
            <person name="Iacono M."/>
            <person name="Ikeo K."/>
            <person name="Iwama A."/>
            <person name="Ishikawa T."/>
            <person name="Jakt M."/>
            <person name="Kanapin A."/>
            <person name="Katoh M."/>
            <person name="Kawasawa Y."/>
            <person name="Kelso J."/>
            <person name="Kitamura H."/>
            <person name="Kitano H."/>
            <person name="Kollias G."/>
            <person name="Krishnan S.P."/>
            <person name="Kruger A."/>
            <person name="Kummerfeld S.K."/>
            <person name="Kurochkin I.V."/>
            <person name="Lareau L.F."/>
            <person name="Lazarevic D."/>
            <person name="Lipovich L."/>
            <person name="Liu J."/>
            <person name="Liuni S."/>
            <person name="McWilliam S."/>
            <person name="Madan Babu M."/>
            <person name="Madera M."/>
            <person name="Marchionni L."/>
            <person name="Matsuda H."/>
            <person name="Matsuzawa S."/>
            <person name="Miki H."/>
            <person name="Mignone F."/>
            <person name="Miyake S."/>
            <person name="Morris K."/>
            <person name="Mottagui-Tabar S."/>
            <person name="Mulder N."/>
            <person name="Nakano N."/>
            <person name="Nakauchi H."/>
            <person name="Ng P."/>
            <person name="Nilsson R."/>
            <person name="Nishiguchi S."/>
            <person name="Nishikawa S."/>
            <person name="Nori F."/>
            <person name="Ohara O."/>
            <person name="Okazaki Y."/>
            <person name="Orlando V."/>
            <person name="Pang K.C."/>
            <person name="Pavan W.J."/>
            <person name="Pavesi G."/>
            <person name="Pesole G."/>
            <person name="Petrovsky N."/>
            <person name="Piazza S."/>
            <person name="Reed J."/>
            <person name="Reid J.F."/>
            <person name="Ring B.Z."/>
            <person name="Ringwald M."/>
            <person name="Rost B."/>
            <person name="Ruan Y."/>
            <person name="Salzberg S.L."/>
            <person name="Sandelin A."/>
            <person name="Schneider C."/>
            <person name="Schoenbach C."/>
            <person name="Sekiguchi K."/>
            <person name="Semple C.A."/>
            <person name="Seno S."/>
            <person name="Sessa L."/>
            <person name="Sheng Y."/>
            <person name="Shibata Y."/>
            <person name="Shimada H."/>
            <person name="Shimada K."/>
            <person name="Silva D."/>
            <person name="Sinclair B."/>
            <person name="Sperling S."/>
            <person name="Stupka E."/>
            <person name="Sugiura K."/>
            <person name="Sultana R."/>
            <person name="Takenaka Y."/>
            <person name="Taki K."/>
            <person name="Tammoja K."/>
            <person name="Tan S.L."/>
            <person name="Tang S."/>
            <person name="Taylor M.S."/>
            <person name="Tegner J."/>
            <person name="Teichmann S.A."/>
            <person name="Ueda H.R."/>
            <person name="van Nimwegen E."/>
            <person name="Verardo R."/>
            <person name="Wei C.L."/>
            <person name="Yagi K."/>
            <person name="Yamanishi H."/>
            <person name="Zabarovsky E."/>
            <person name="Zhu S."/>
            <person name="Zimmer A."/>
            <person name="Hide W."/>
            <person name="Bult C."/>
            <person name="Grimmond S.M."/>
            <person name="Teasdale R.D."/>
            <person name="Liu E.T."/>
            <person name="Brusic V."/>
            <person name="Quackenbush J."/>
            <person name="Wahlestedt C."/>
            <person name="Mattick J.S."/>
            <person name="Hume D.A."/>
            <person name="Kai C."/>
            <person name="Sasaki D."/>
            <person name="Tomaru Y."/>
            <person name="Fukuda S."/>
            <person name="Kanamori-Katayama M."/>
            <person name="Suzuki M."/>
            <person name="Aoki J."/>
            <person name="Arakawa T."/>
            <person name="Iida J."/>
            <person name="Imamura K."/>
            <person name="Itoh M."/>
            <person name="Kato T."/>
            <person name="Kawaji H."/>
            <person name="Kawagashira N."/>
            <person name="Kawashima T."/>
            <person name="Kojima M."/>
            <person name="Kondo S."/>
            <person name="Konno H."/>
            <person name="Nakano K."/>
            <person name="Ninomiya N."/>
            <person name="Nishio T."/>
            <person name="Okada M."/>
            <person name="Plessy C."/>
            <person name="Shibata K."/>
            <person name="Shiraki T."/>
            <person name="Suzuki S."/>
            <person name="Tagami M."/>
            <person name="Waki K."/>
            <person name="Watahiki A."/>
            <person name="Okamura-Oho Y."/>
            <person name="Suzuki H."/>
            <person name="Kawai J."/>
            <person name="Hayashizaki Y."/>
        </authorList>
    </citation>
    <scope>NUCLEOTIDE SEQUENCE [LARGE SCALE MRNA] (ISOFORM 1)</scope>
    <source>
        <strain>C57BL/6J</strain>
        <tissue>Cerebellum</tissue>
    </source>
</reference>
<reference key="2">
    <citation type="journal article" date="2009" name="PLoS Biol.">
        <title>Lineage-specific biology revealed by a finished genome assembly of the mouse.</title>
        <authorList>
            <person name="Church D.M."/>
            <person name="Goodstadt L."/>
            <person name="Hillier L.W."/>
            <person name="Zody M.C."/>
            <person name="Goldstein S."/>
            <person name="She X."/>
            <person name="Bult C.J."/>
            <person name="Agarwala R."/>
            <person name="Cherry J.L."/>
            <person name="DiCuccio M."/>
            <person name="Hlavina W."/>
            <person name="Kapustin Y."/>
            <person name="Meric P."/>
            <person name="Maglott D."/>
            <person name="Birtle Z."/>
            <person name="Marques A.C."/>
            <person name="Graves T."/>
            <person name="Zhou S."/>
            <person name="Teague B."/>
            <person name="Potamousis K."/>
            <person name="Churas C."/>
            <person name="Place M."/>
            <person name="Herschleb J."/>
            <person name="Runnheim R."/>
            <person name="Forrest D."/>
            <person name="Amos-Landgraf J."/>
            <person name="Schwartz D.C."/>
            <person name="Cheng Z."/>
            <person name="Lindblad-Toh K."/>
            <person name="Eichler E.E."/>
            <person name="Ponting C.P."/>
        </authorList>
    </citation>
    <scope>NUCLEOTIDE SEQUENCE [LARGE SCALE GENOMIC DNA]</scope>
    <source>
        <strain>C57BL/6J</strain>
    </source>
</reference>
<reference key="3">
    <citation type="journal article" date="2004" name="Genome Res.">
        <title>The status, quality, and expansion of the NIH full-length cDNA project: the Mammalian Gene Collection (MGC).</title>
        <authorList>
            <consortium name="The MGC Project Team"/>
        </authorList>
    </citation>
    <scope>NUCLEOTIDE SEQUENCE [LARGE SCALE MRNA] (ISOFORMS 1 AND 2)</scope>
    <source>
        <tissue>Brain</tissue>
        <tissue>Mammary gland</tissue>
    </source>
</reference>
<reference key="4">
    <citation type="journal article" date="2010" name="Cell">
        <title>A tissue-specific atlas of mouse protein phosphorylation and expression.</title>
        <authorList>
            <person name="Huttlin E.L."/>
            <person name="Jedrychowski M.P."/>
            <person name="Elias J.E."/>
            <person name="Goswami T."/>
            <person name="Rad R."/>
            <person name="Beausoleil S.A."/>
            <person name="Villen J."/>
            <person name="Haas W."/>
            <person name="Sowa M.E."/>
            <person name="Gygi S.P."/>
        </authorList>
    </citation>
    <scope>PHOSPHORYLATION [LARGE SCALE ANALYSIS] AT SER-29</scope>
    <scope>IDENTIFICATION BY MASS SPECTROMETRY [LARGE SCALE ANALYSIS]</scope>
    <source>
        <tissue>Brain</tissue>
        <tissue>Heart</tissue>
        <tissue>Kidney</tissue>
        <tissue>Liver</tissue>
        <tissue>Pancreas</tissue>
        <tissue>Testis</tissue>
    </source>
</reference>
<comment type="function">
    <text evidence="1">Auxillary component of the N-terminal acetyltransferase C (NatC) complex which catalyzes acetylation of N-terminal methionine residues. N-terminal acetylation protects proteins from ubiquitination and degradation by the N-end rule pathway.</text>
</comment>
<comment type="subunit">
    <text evidence="1">Component of the N-terminal acetyltransferase C (NatC) complex, which is composed of NAA35, NAA38 and NAA30.</text>
</comment>
<comment type="subcellular location">
    <subcellularLocation>
        <location evidence="1">Cytoplasm</location>
    </subcellularLocation>
    <subcellularLocation>
        <location evidence="1">Nucleus</location>
    </subcellularLocation>
</comment>
<comment type="alternative products">
    <event type="alternative splicing"/>
    <isoform>
        <id>Q9D2U5-1</id>
        <name>1</name>
        <sequence type="displayed"/>
    </isoform>
    <isoform>
        <id>Q9D2U5-2</id>
        <name>2</name>
        <sequence type="described" ref="VSP_027567"/>
    </isoform>
</comment>
<comment type="similarity">
    <text evidence="5">Belongs to the snRNP Sm proteins family.</text>
</comment>
<feature type="initiator methionine" description="Removed" evidence="1">
    <location>
        <position position="1"/>
    </location>
</feature>
<feature type="chain" id="PRO_0000299156" description="N-alpha-acetyltransferase 38, NatC auxiliary subunit">
    <location>
        <begin position="2"/>
        <end position="125"/>
    </location>
</feature>
<feature type="domain" description="Sm" evidence="2">
    <location>
        <begin position="40"/>
        <end position="118"/>
    </location>
</feature>
<feature type="region of interest" description="Disordered" evidence="3">
    <location>
        <begin position="1"/>
        <end position="42"/>
    </location>
</feature>
<feature type="compositionally biased region" description="Low complexity" evidence="3">
    <location>
        <begin position="18"/>
        <end position="28"/>
    </location>
</feature>
<feature type="modified residue" description="N-acetylalanine" evidence="1">
    <location>
        <position position="2"/>
    </location>
</feature>
<feature type="modified residue" description="Phosphoserine" evidence="1">
    <location>
        <position position="22"/>
    </location>
</feature>
<feature type="modified residue" description="Phosphoserine" evidence="1">
    <location>
        <position position="25"/>
    </location>
</feature>
<feature type="modified residue" description="Phosphoserine" evidence="6">
    <location>
        <position position="29"/>
    </location>
</feature>
<feature type="splice variant" id="VSP_027567" description="In isoform 2." evidence="4">
    <location>
        <begin position="1"/>
        <end position="52"/>
    </location>
</feature>
<accession>Q9D2U5</accession>
<accession>Q05BF7</accession>
<evidence type="ECO:0000250" key="1">
    <source>
        <dbReference type="UniProtKB" id="Q9BRA0"/>
    </source>
</evidence>
<evidence type="ECO:0000255" key="2">
    <source>
        <dbReference type="PROSITE-ProRule" id="PRU01346"/>
    </source>
</evidence>
<evidence type="ECO:0000256" key="3">
    <source>
        <dbReference type="SAM" id="MobiDB-lite"/>
    </source>
</evidence>
<evidence type="ECO:0000303" key="4">
    <source>
    </source>
</evidence>
<evidence type="ECO:0000305" key="5"/>
<evidence type="ECO:0007744" key="6">
    <source>
    </source>
</evidence>